<organism>
    <name type="scientific">Nematostella vectensis</name>
    <name type="common">Starlet sea anemone</name>
    <dbReference type="NCBI Taxonomy" id="45351"/>
    <lineage>
        <taxon>Eukaryota</taxon>
        <taxon>Metazoa</taxon>
        <taxon>Cnidaria</taxon>
        <taxon>Anthozoa</taxon>
        <taxon>Hexacorallia</taxon>
        <taxon>Actiniaria</taxon>
        <taxon>Edwardsiidae</taxon>
        <taxon>Nematostella</taxon>
    </lineage>
</organism>
<proteinExistence type="evidence at protein level"/>
<sequence>MRTLVVLLIGAVLLCSANAFLDELLAESVNDMTDKRACFDKYKSNICGGVISPAHCVRRSGRMAKFAKENCAHFCGFC</sequence>
<comment type="function">
    <text evidence="6">Probable neuropeptide.</text>
</comment>
<comment type="tissue specificity">
    <text evidence="4">Expressed in ganglion neurons residing in the mesoglea (observed in both planulae and primary polyps). Not expressed in nematocytes.</text>
</comment>
<comment type="developmental stage">
    <text evidence="3 4">Is strongly detected in planulae, a little more detected in primary polyps (9d), and still a little more in both adult females and males (at protein level) (PubMed:33060291). Transcripts are expressed early in the life cycle and their expression is maintained through the adult stage (PubMed:29739837).</text>
</comment>
<comment type="online information" name="National Center for Biotechnology Information (NCBI)">
    <link uri="https://www.ncbi.nlm.nih.gov/nuccore/HADO01000486.1/"/>
</comment>
<evidence type="ECO:0000255" key="1"/>
<evidence type="ECO:0000255" key="2">
    <source>
        <dbReference type="PROSITE-ProRule" id="PRU01005"/>
    </source>
</evidence>
<evidence type="ECO:0000269" key="3">
    <source>
    </source>
</evidence>
<evidence type="ECO:0000269" key="4">
    <source>
    </source>
</evidence>
<evidence type="ECO:0000303" key="5">
    <source>
    </source>
</evidence>
<evidence type="ECO:0000305" key="6">
    <source>
    </source>
</evidence>
<name>CL8L_NEMVE</name>
<keyword id="KW-0165">Cleavage on pair of basic residues</keyword>
<keyword id="KW-0903">Direct protein sequencing</keyword>
<keyword id="KW-1015">Disulfide bond</keyword>
<keyword id="KW-0527">Neuropeptide</keyword>
<keyword id="KW-0732">Signal</keyword>
<accession>P0DQR8</accession>
<feature type="signal peptide" evidence="1">
    <location>
        <begin position="1"/>
        <end position="19"/>
    </location>
</feature>
<feature type="propeptide" id="PRO_0000453916" evidence="6">
    <location>
        <begin position="20"/>
        <end position="36"/>
    </location>
</feature>
<feature type="chain" id="PRO_0000453917" description="Protein Class8-like" evidence="6">
    <location>
        <begin position="37"/>
        <end position="78"/>
    </location>
</feature>
<feature type="domain" description="ShKT" evidence="2">
    <location>
        <begin position="38"/>
        <end position="78"/>
    </location>
</feature>
<feature type="disulfide bond" evidence="2">
    <location>
        <begin position="38"/>
        <end position="78"/>
    </location>
</feature>
<feature type="disulfide bond" evidence="2">
    <location>
        <begin position="47"/>
        <end position="71"/>
    </location>
</feature>
<feature type="disulfide bond" evidence="2">
    <location>
        <begin position="56"/>
        <end position="75"/>
    </location>
</feature>
<dbReference type="RefSeq" id="XP_032230999.1">
    <property type="nucleotide sequence ID" value="XM_032375108.2"/>
</dbReference>
<dbReference type="SMR" id="P0DQR8"/>
<dbReference type="GeneID" id="116614269"/>
<dbReference type="GO" id="GO:0007218">
    <property type="term" value="P:neuropeptide signaling pathway"/>
    <property type="evidence" value="ECO:0007669"/>
    <property type="project" value="UniProtKB-KW"/>
</dbReference>
<protein>
    <recommendedName>
        <fullName evidence="5">Protein Class8-like</fullName>
    </recommendedName>
</protein>
<reference key="1">
    <citation type="journal article" date="2020" name="Proc. Natl. Acad. Sci. U.S.A.">
        <title>Toxin-like neuropeptides in the sea anemone Nematostella unravel recruitment from the nervous system to venom.</title>
        <authorList>
            <person name="Sachkova M.Y."/>
            <person name="Landau M."/>
            <person name="Surm J.M."/>
            <person name="Macrander J."/>
            <person name="Singer S.A."/>
            <person name="Reitzel A.M."/>
            <person name="Moran Y."/>
        </authorList>
    </citation>
    <scope>NUCLEOTIDE SEQUENCE [MRNA]</scope>
    <scope>PROTEIN SEQUENCE OF 44-58</scope>
    <scope>IDENTIFICATION BY MASS SPECTROMETRY</scope>
    <scope>TISSUE SPECIFICITY</scope>
    <scope>DEVELOPMENTAL STAGE</scope>
</reference>
<reference key="2">
    <citation type="journal article" date="2018" name="Development">
        <title>NvERTx: a gene expression database to compare embryogenesis and regeneration in the sea anemone Nematostella vectensis.</title>
        <authorList>
            <person name="Warner J.F."/>
            <person name="Guerlais V."/>
            <person name="Amiel A.R."/>
            <person name="Johnston H."/>
            <person name="Nedoncelle K."/>
            <person name="Roettinger E."/>
        </authorList>
    </citation>
    <scope>DEVELOPMENTAL STAGE</scope>
</reference>